<name>HIPK3_RAT</name>
<evidence type="ECO:0000250" key="1"/>
<evidence type="ECO:0000250" key="2">
    <source>
        <dbReference type="UniProtKB" id="Q9ERH7"/>
    </source>
</evidence>
<evidence type="ECO:0000250" key="3">
    <source>
        <dbReference type="UniProtKB" id="Q9H422"/>
    </source>
</evidence>
<evidence type="ECO:0000255" key="4">
    <source>
        <dbReference type="PROSITE-ProRule" id="PRU00159"/>
    </source>
</evidence>
<evidence type="ECO:0000255" key="5">
    <source>
        <dbReference type="PROSITE-ProRule" id="PRU10027"/>
    </source>
</evidence>
<evidence type="ECO:0000256" key="6">
    <source>
        <dbReference type="SAM" id="MobiDB-lite"/>
    </source>
</evidence>
<evidence type="ECO:0000269" key="7">
    <source>
    </source>
</evidence>
<evidence type="ECO:0000305" key="8"/>
<comment type="function">
    <text evidence="7">Seems to negatively regulate apoptosis by promoting FADD phosphorylation. Enhances androgen receptor-mediated transcription. May act as a transcriptional corepressor for NK homeodomain transcription factors.</text>
</comment>
<comment type="catalytic activity">
    <reaction>
        <text>L-seryl-[protein] + ATP = O-phospho-L-seryl-[protein] + ADP + H(+)</text>
        <dbReference type="Rhea" id="RHEA:17989"/>
        <dbReference type="Rhea" id="RHEA-COMP:9863"/>
        <dbReference type="Rhea" id="RHEA-COMP:11604"/>
        <dbReference type="ChEBI" id="CHEBI:15378"/>
        <dbReference type="ChEBI" id="CHEBI:29999"/>
        <dbReference type="ChEBI" id="CHEBI:30616"/>
        <dbReference type="ChEBI" id="CHEBI:83421"/>
        <dbReference type="ChEBI" id="CHEBI:456216"/>
        <dbReference type="EC" id="2.7.11.1"/>
    </reaction>
</comment>
<comment type="catalytic activity">
    <reaction>
        <text>L-threonyl-[protein] + ATP = O-phospho-L-threonyl-[protein] + ADP + H(+)</text>
        <dbReference type="Rhea" id="RHEA:46608"/>
        <dbReference type="Rhea" id="RHEA-COMP:11060"/>
        <dbReference type="Rhea" id="RHEA-COMP:11605"/>
        <dbReference type="ChEBI" id="CHEBI:15378"/>
        <dbReference type="ChEBI" id="CHEBI:30013"/>
        <dbReference type="ChEBI" id="CHEBI:30616"/>
        <dbReference type="ChEBI" id="CHEBI:61977"/>
        <dbReference type="ChEBI" id="CHEBI:456216"/>
        <dbReference type="EC" id="2.7.11.1"/>
    </reaction>
</comment>
<comment type="subunit">
    <text evidence="1 7">Interacts with Nkx1-2. Interacts with FAS and DAXX. Probably part of a complex consisting of HIPK3, FAS and FADD. Interacts with UBL1/SUMO-1 (By similarity). Interacts with and stabilizes ligand-bound androgen receptor (AR).</text>
</comment>
<comment type="subcellular location">
    <subcellularLocation>
        <location evidence="7">Nucleus</location>
    </subcellularLocation>
</comment>
<comment type="PTM">
    <text>Autophosphorylated. Autophosphorylation is not required for catalytic activity.</text>
</comment>
<comment type="PTM">
    <text evidence="1">May be sumoylated.</text>
</comment>
<comment type="similarity">
    <text evidence="8">Belongs to the protein kinase superfamily. CMGC Ser/Thr protein kinase family. HIPK subfamily.</text>
</comment>
<reference key="1">
    <citation type="journal article" date="1998" name="Mol. Biol. Cell">
        <title>Activation of androgen receptor function by a novel nuclear protein kinase.</title>
        <authorList>
            <person name="Moilanen A.-M."/>
            <person name="Karvonen U."/>
            <person name="Poukka H."/>
            <person name="Jaenne O.A."/>
            <person name="Palvimo J.J."/>
        </authorList>
    </citation>
    <scope>NUCLEOTIDE SEQUENCE [MRNA]</scope>
    <scope>SUBCELLULAR LOCATION</scope>
    <scope>MUTAGENESIS OF LYS-226; SER-357 AND TYR-359</scope>
    <scope>AUTOPHOSPHORYLATION</scope>
    <scope>INTERACTION WITH AR</scope>
    <scope>FUNCTION</scope>
    <source>
        <tissue>Testis</tissue>
    </source>
</reference>
<keyword id="KW-0053">Apoptosis</keyword>
<keyword id="KW-0067">ATP-binding</keyword>
<keyword id="KW-1017">Isopeptide bond</keyword>
<keyword id="KW-0418">Kinase</keyword>
<keyword id="KW-0547">Nucleotide-binding</keyword>
<keyword id="KW-0539">Nucleus</keyword>
<keyword id="KW-0597">Phosphoprotein</keyword>
<keyword id="KW-1185">Reference proteome</keyword>
<keyword id="KW-0723">Serine/threonine-protein kinase</keyword>
<keyword id="KW-0804">Transcription</keyword>
<keyword id="KW-0805">Transcription regulation</keyword>
<keyword id="KW-0808">Transferase</keyword>
<keyword id="KW-0832">Ubl conjugation</keyword>
<organism>
    <name type="scientific">Rattus norvegicus</name>
    <name type="common">Rat</name>
    <dbReference type="NCBI Taxonomy" id="10116"/>
    <lineage>
        <taxon>Eukaryota</taxon>
        <taxon>Metazoa</taxon>
        <taxon>Chordata</taxon>
        <taxon>Craniata</taxon>
        <taxon>Vertebrata</taxon>
        <taxon>Euteleostomi</taxon>
        <taxon>Mammalia</taxon>
        <taxon>Eutheria</taxon>
        <taxon>Euarchontoglires</taxon>
        <taxon>Glires</taxon>
        <taxon>Rodentia</taxon>
        <taxon>Myomorpha</taxon>
        <taxon>Muroidea</taxon>
        <taxon>Muridae</taxon>
        <taxon>Murinae</taxon>
        <taxon>Rattus</taxon>
    </lineage>
</organism>
<accession>O88850</accession>
<dbReference type="EC" id="2.7.11.1"/>
<dbReference type="EMBL" id="AF036959">
    <property type="protein sequence ID" value="AAC35249.1"/>
    <property type="molecule type" value="mRNA"/>
</dbReference>
<dbReference type="PIR" id="T14154">
    <property type="entry name" value="T14154"/>
</dbReference>
<dbReference type="RefSeq" id="NP_113975.1">
    <property type="nucleotide sequence ID" value="NM_031787.1"/>
</dbReference>
<dbReference type="SMR" id="O88850"/>
<dbReference type="DIP" id="DIP-5932N"/>
<dbReference type="FunCoup" id="O88850">
    <property type="interactions" value="1146"/>
</dbReference>
<dbReference type="STRING" id="10116.ENSRNOP00000073200"/>
<dbReference type="iPTMnet" id="O88850"/>
<dbReference type="PhosphoSitePlus" id="O88850"/>
<dbReference type="PaxDb" id="10116-ENSRNOP00000015775"/>
<dbReference type="GeneID" id="83617"/>
<dbReference type="KEGG" id="rno:83617"/>
<dbReference type="UCSC" id="RGD:619884">
    <property type="organism name" value="rat"/>
</dbReference>
<dbReference type="AGR" id="RGD:619884"/>
<dbReference type="CTD" id="10114"/>
<dbReference type="RGD" id="619884">
    <property type="gene designation" value="Hipk3"/>
</dbReference>
<dbReference type="eggNOG" id="KOG0667">
    <property type="taxonomic scope" value="Eukaryota"/>
</dbReference>
<dbReference type="InParanoid" id="O88850"/>
<dbReference type="PRO" id="PR:O88850"/>
<dbReference type="Proteomes" id="UP000002494">
    <property type="component" value="Unplaced"/>
</dbReference>
<dbReference type="GO" id="GO:0005737">
    <property type="term" value="C:cytoplasm"/>
    <property type="evidence" value="ECO:0000266"/>
    <property type="project" value="RGD"/>
</dbReference>
<dbReference type="GO" id="GO:0005634">
    <property type="term" value="C:nucleus"/>
    <property type="evidence" value="ECO:0000318"/>
    <property type="project" value="GO_Central"/>
</dbReference>
<dbReference type="GO" id="GO:0016605">
    <property type="term" value="C:PML body"/>
    <property type="evidence" value="ECO:0000266"/>
    <property type="project" value="RGD"/>
</dbReference>
<dbReference type="GO" id="GO:0005524">
    <property type="term" value="F:ATP binding"/>
    <property type="evidence" value="ECO:0007669"/>
    <property type="project" value="UniProtKB-KW"/>
</dbReference>
<dbReference type="GO" id="GO:0004672">
    <property type="term" value="F:protein kinase activity"/>
    <property type="evidence" value="ECO:0000266"/>
    <property type="project" value="RGD"/>
</dbReference>
<dbReference type="GO" id="GO:0106310">
    <property type="term" value="F:protein serine kinase activity"/>
    <property type="evidence" value="ECO:0007669"/>
    <property type="project" value="RHEA"/>
</dbReference>
<dbReference type="GO" id="GO:0004674">
    <property type="term" value="F:protein serine/threonine kinase activity"/>
    <property type="evidence" value="ECO:0000266"/>
    <property type="project" value="RGD"/>
</dbReference>
<dbReference type="GO" id="GO:0004713">
    <property type="term" value="F:protein tyrosine kinase activity"/>
    <property type="evidence" value="ECO:0000318"/>
    <property type="project" value="GO_Central"/>
</dbReference>
<dbReference type="GO" id="GO:0006915">
    <property type="term" value="P:apoptotic process"/>
    <property type="evidence" value="ECO:0007669"/>
    <property type="project" value="UniProtKB-KW"/>
</dbReference>
<dbReference type="GO" id="GO:0009299">
    <property type="term" value="P:mRNA transcription"/>
    <property type="evidence" value="ECO:0000266"/>
    <property type="project" value="RGD"/>
</dbReference>
<dbReference type="GO" id="GO:0043066">
    <property type="term" value="P:negative regulation of apoptotic process"/>
    <property type="evidence" value="ECO:0000266"/>
    <property type="project" value="RGD"/>
</dbReference>
<dbReference type="CDD" id="cd14229">
    <property type="entry name" value="STKc_HIPK3"/>
    <property type="match status" value="1"/>
</dbReference>
<dbReference type="FunFam" id="1.10.510.10:FF:000029">
    <property type="entry name" value="Homeodomain-interacting protein kinase 2 isoform 1"/>
    <property type="match status" value="1"/>
</dbReference>
<dbReference type="FunFam" id="3.30.200.20:FF:000022">
    <property type="entry name" value="Homeodomain-interacting protein kinase 2 isoform 1"/>
    <property type="match status" value="1"/>
</dbReference>
<dbReference type="Gene3D" id="3.30.200.20">
    <property type="entry name" value="Phosphorylase Kinase, domain 1"/>
    <property type="match status" value="1"/>
</dbReference>
<dbReference type="Gene3D" id="1.10.510.10">
    <property type="entry name" value="Transferase(Phosphotransferase) domain 1"/>
    <property type="match status" value="1"/>
</dbReference>
<dbReference type="InterPro" id="IPR011009">
    <property type="entry name" value="Kinase-like_dom_sf"/>
</dbReference>
<dbReference type="InterPro" id="IPR000719">
    <property type="entry name" value="Prot_kinase_dom"/>
</dbReference>
<dbReference type="InterPro" id="IPR017441">
    <property type="entry name" value="Protein_kinase_ATP_BS"/>
</dbReference>
<dbReference type="InterPro" id="IPR008271">
    <property type="entry name" value="Ser/Thr_kinase_AS"/>
</dbReference>
<dbReference type="InterPro" id="IPR050494">
    <property type="entry name" value="Ser_Thr_dual-spec_kinase"/>
</dbReference>
<dbReference type="PANTHER" id="PTHR24058">
    <property type="entry name" value="DUAL SPECIFICITY PROTEIN KINASE"/>
    <property type="match status" value="1"/>
</dbReference>
<dbReference type="PANTHER" id="PTHR24058:SF45">
    <property type="entry name" value="HOMEODOMAIN-INTERACTING PROTEIN KINASE 3"/>
    <property type="match status" value="1"/>
</dbReference>
<dbReference type="Pfam" id="PF00069">
    <property type="entry name" value="Pkinase"/>
    <property type="match status" value="1"/>
</dbReference>
<dbReference type="SMART" id="SM00220">
    <property type="entry name" value="S_TKc"/>
    <property type="match status" value="1"/>
</dbReference>
<dbReference type="SUPFAM" id="SSF56112">
    <property type="entry name" value="Protein kinase-like (PK-like)"/>
    <property type="match status" value="1"/>
</dbReference>
<dbReference type="PROSITE" id="PS00107">
    <property type="entry name" value="PROTEIN_KINASE_ATP"/>
    <property type="match status" value="1"/>
</dbReference>
<dbReference type="PROSITE" id="PS50011">
    <property type="entry name" value="PROTEIN_KINASE_DOM"/>
    <property type="match status" value="1"/>
</dbReference>
<dbReference type="PROSITE" id="PS00108">
    <property type="entry name" value="PROTEIN_KINASE_ST"/>
    <property type="match status" value="1"/>
</dbReference>
<gene>
    <name type="primary">Hipk3</name>
    <name type="synonym">Fist</name>
</gene>
<sequence>MASQVLVYPPYVYQTQSSAFCSVKKLKVEPSGCVFQERACPQIHVNGRHFGNPLPSTKGSAFQTKIPFSKPRGHSFSLQAGAIVVKDTAGATKVIAAQAQQAGVEAPRAVVWRNRLHFLGGPQRCGLKRKSEELDNHSGAMQIVDELSILPAMLQTNMGNPVTVVTATTGSKQNCTSGEGDYQLVQHEVLCSVKNTYEVLDFLGRGTFGQVVKCWKRGTNEIVAIKILKNHPSYARQGQIEVSILARLSTENADEYNFVRAYECFQHRNHTCLVFEMLEQNLYDFLKQNKFSPLPLKVIRPVLQQVATALKKLKSLGLIHADLKPENIMLVDPVRQPYRVKVIDFGSASHVSKTVCSTYLQSRYYRAPEIILGLPFCEAIDMWSLGCVIAELFLGWPLYPGALEYDQIRYISQTQGLPGEQLLNVGTKSTRFFCRETDMSHSGWRLKTLEEHEAETGMKSKEARKYIFNSLDDIVHVNTVMDLEGSDLLAEKADRREFVSLLKKMLLIDADLRITPIETLNHPFVSMKHLLDFPHSSHVKSCFHIMDICKSPSSCETNNHSKMSLLRPVASNGTAALAANFTKVGTLRSQALTTSAHSVVHHGIPLQAGTAQFGCGDAFHQTLIICPPAIQGIPAAHGKPTSYSIRVDNTVPLVTQAPAVQPLQIRPGVLSQTWSGRTQQMLIPAWQQVTPMAPAAATLTSEGMAGSQRLGDWGKMIPHSNHYNSVMPPPLLTNQITLSAPQPISVGIAHVVWPQPATTKKNKLCQNRSNSLQNTNVPHSAFISPKIISGKEVEEVSCVETQDNHTSEGEARTCHEASVRQDSSVSDKQRQTIIIADSPSPAVSVITISSDTDDEETSPRPSLRECKGSLDCEACQSTLNIDRMCSLSSPDSTLSTSSSGQSSPSPCKRPNSMSDDEQESGCETVDGSPTSDSSGHDSPFAESSFVEDTPQNPELGTCAGTEAKPALSTAVEPPVGTERGLNVDAHMANTDSTCQPLTKGQPAPGKLNQPSASAARQQKPTSAFQQQHLNLSQVQHFGTGHQEWNGNFGHRRQQAYIPTSVTSNPFTLSHGSPNHTAVHAHLAGSAHLGGQPTLLPYPPSTALSSAAPVAHLLASPCTSRPMLQHPTYNISHPSGIVHQVPVGINPRLLPSPTIHQTQYKPIFPPHSYIAASPAYTGFPLSPTKLSQYPYM</sequence>
<proteinExistence type="evidence at protein level"/>
<protein>
    <recommendedName>
        <fullName>Homeodomain-interacting protein kinase 3</fullName>
        <ecNumber>2.7.11.1</ecNumber>
    </recommendedName>
    <alternativeName>
        <fullName>Androgen receptor-interacting nuclear protein kinase</fullName>
        <shortName>ANPK</shortName>
    </alternativeName>
</protein>
<feature type="chain" id="PRO_0000086000" description="Homeodomain-interacting protein kinase 3">
    <location>
        <begin position="1"/>
        <end position="1191"/>
    </location>
</feature>
<feature type="domain" description="Protein kinase" evidence="4">
    <location>
        <begin position="197"/>
        <end position="525"/>
    </location>
</feature>
<feature type="region of interest" description="Interaction with AR" evidence="7">
    <location>
        <begin position="766"/>
        <end position="920"/>
    </location>
</feature>
<feature type="region of interest" description="Interaction with FAS" evidence="1">
    <location>
        <begin position="774"/>
        <end position="867"/>
    </location>
</feature>
<feature type="region of interest" description="Disordered" evidence="6">
    <location>
        <begin position="801"/>
        <end position="828"/>
    </location>
</feature>
<feature type="region of interest" description="Interaction with UBL1" evidence="1">
    <location>
        <begin position="846"/>
        <end position="856"/>
    </location>
</feature>
<feature type="region of interest" description="Disordered" evidence="6">
    <location>
        <begin position="888"/>
        <end position="960"/>
    </location>
</feature>
<feature type="region of interest" description="Disordered" evidence="6">
    <location>
        <begin position="993"/>
        <end position="1022"/>
    </location>
</feature>
<feature type="compositionally biased region" description="Basic and acidic residues" evidence="6">
    <location>
        <begin position="802"/>
        <end position="828"/>
    </location>
</feature>
<feature type="compositionally biased region" description="Low complexity" evidence="6">
    <location>
        <begin position="888"/>
        <end position="905"/>
    </location>
</feature>
<feature type="compositionally biased region" description="Polar residues" evidence="6">
    <location>
        <begin position="1008"/>
        <end position="1022"/>
    </location>
</feature>
<feature type="active site" description="Proton acceptor" evidence="4 5">
    <location>
        <position position="322"/>
    </location>
</feature>
<feature type="binding site" evidence="4">
    <location>
        <begin position="203"/>
        <end position="211"/>
    </location>
    <ligand>
        <name>ATP</name>
        <dbReference type="ChEBI" id="CHEBI:30616"/>
    </ligand>
</feature>
<feature type="binding site" evidence="4">
    <location>
        <position position="226"/>
    </location>
    <ligand>
        <name>ATP</name>
        <dbReference type="ChEBI" id="CHEBI:30616"/>
    </ligand>
</feature>
<feature type="modified residue" description="Phosphotyrosine" evidence="2">
    <location>
        <position position="359"/>
    </location>
</feature>
<feature type="cross-link" description="Glycyl lysine isopeptide (Lys-Gly) (interchain with G-Cter in SUMO2)" evidence="3">
    <location>
        <position position="27"/>
    </location>
</feature>
<feature type="mutagenesis site" description="No enzymatic activity." evidence="7">
    <original>K</original>
    <variation>R</variation>
    <location>
        <position position="226"/>
    </location>
</feature>
<feature type="mutagenesis site" description="Reduces enzymatic activity but no effect on autophosphorylation; when associated with A-359." evidence="7">
    <original>S</original>
    <variation>A</variation>
    <location>
        <position position="357"/>
    </location>
</feature>
<feature type="mutagenesis site" description="Reduces enzymatic activity; but no effect on autophosphorylation; when associated with A-357." evidence="7">
    <original>Y</original>
    <variation>A</variation>
    <location>
        <position position="359"/>
    </location>
</feature>